<name>KINUB_ARATH</name>
<gene>
    <name evidence="8" type="primary">KINUB</name>
    <name evidence="12" type="synonym">ARK2</name>
    <name evidence="10" type="ordered locus">At1g01950</name>
    <name evidence="11" type="ORF">F22M8.8</name>
</gene>
<keyword id="KW-0025">Alternative splicing</keyword>
<keyword id="KW-0067">ATP-binding</keyword>
<keyword id="KW-0175">Coiled coil</keyword>
<keyword id="KW-0963">Cytoplasm</keyword>
<keyword id="KW-0206">Cytoskeleton</keyword>
<keyword id="KW-0493">Microtubule</keyword>
<keyword id="KW-0505">Motor protein</keyword>
<keyword id="KW-0547">Nucleotide-binding</keyword>
<keyword id="KW-1185">Reference proteome</keyword>
<keyword id="KW-0677">Repeat</keyword>
<sequence>MAMASSRNGAVRGSMRPVSGANSSNLRSSSFKSRIPSSAPAPRRSSSASIGAADNGVPGRVRVAVRLRPRNADESVADADFADCVELQPELKRLKLRKNNWDTETYEFDEVLTEAASQKRVYEVVAKPVVESVLEGYNGTVMAYGQTGTGKTFTLGRLGDEDTAARGIMVRSMEDIIGGTSLDTDSISVSYLQLYMETIQDLLDPTNDNIAIVEDPRTGDVSLPGATHVEIRNQQNFLELLQLGETHRVAANTKLNTESSRSHAILMVHVKRSVVENEFPVSNEMESSSHFVRPSKPLVRRSKLVLVDLAGSERVHKSGSEGHMLEEAKSINLSLSALGKCINAIAENSPHVPLRDSKLTRLLRDSFGGTARTSLIVTIGPSPRHRGETTSTILFGQRAMKVENMLKIKEEFDYKSLSKKLEVQLDKVIAENERQLKAFDDDVERINRQAQNRISEVEKNFAEALEKEKLKCQMEYMESVKKLEEKLISNQRNHENGKRNGEVNGVVTASEFTRLKESLENEMKLRKSAEEEVSKVKSQSTLKTRSGEGEDAGITRLQKLLEDEALQKKKLEEEVTILRSQLVQLTFEADQMRRCLDRGAPGNSYSGTDSLPSRHSQARESVNGQKAPFATLCEQVGLQKILQLLESDDANIRIHAVKVVANLAAEEANQEKIVEAGGLTSLLMLLRSYEDETVRRVAAGAIANLAMNEVSQQLIVDQGGISLLSLTAADAEDPQTLRMVAGAIANLCGNDKLQARLWSDGGIKALLGMVRCGHPDVLAQVARGIANFAKCESRATTQGVKSGRSLLIEDGALPWIVQHANDEAAPIRRHIELALCHLAQHEVNAKEMISGGALWELVRISKECSREDIRSLAHRTLSSSPVFRSEIRRLGIQF</sequence>
<comment type="function">
    <text evidence="5">Involved in the control of epidermal-cell morphogenesis in roots and helical growth of roots by promoting microtubule depolymerization and limiting the accumulation of endoplasmic microtubules. Seems to be involved in the control of cell-file rotation (or twisting).</text>
</comment>
<comment type="subunit">
    <text evidence="5">Interacts (via C-terminus) with NEK5.</text>
</comment>
<comment type="subcellular location">
    <subcellularLocation>
        <location evidence="9">Cytoplasm</location>
        <location evidence="9">Cytoskeleton</location>
    </subcellularLocation>
</comment>
<comment type="alternative products">
    <event type="alternative splicing"/>
    <isoform>
        <id>Q9LPC6-1</id>
        <name>1</name>
        <sequence type="displayed"/>
    </isoform>
    <text>A number of isoforms are produced. According to EST sequences.</text>
</comment>
<comment type="tissue specificity">
    <text evidence="5">Expressed in the basal regions and petioles of immature leaves and in the root elongation zone.</text>
</comment>
<comment type="domain">
    <text evidence="1">D-BOX motif functions as a recognition motif for the ubiquitination machinery.</text>
</comment>
<comment type="similarity">
    <text evidence="6">Belongs to the TRAFAC class myosin-kinesin ATPase superfamily. Kinesin family. Ungrouped subfamily.</text>
</comment>
<comment type="sequence caution" evidence="9">
    <conflict type="erroneous gene model prediction">
        <sequence resource="EMBL-CDS" id="AAF76473"/>
    </conflict>
</comment>
<feature type="chain" id="PRO_0000342331" description="Kinesin-like protein KIN-UB">
    <location>
        <begin position="1"/>
        <end position="894"/>
    </location>
</feature>
<feature type="domain" description="Kinesin motor" evidence="3">
    <location>
        <begin position="60"/>
        <end position="402"/>
    </location>
</feature>
<feature type="repeat" description="ARM 1">
    <location>
        <begin position="626"/>
        <end position="665"/>
    </location>
</feature>
<feature type="repeat" description="ARM 2">
    <location>
        <begin position="667"/>
        <end position="707"/>
    </location>
</feature>
<feature type="repeat" description="ARM 3">
    <location>
        <begin position="709"/>
        <end position="749"/>
    </location>
</feature>
<feature type="repeat" description="ARM 4">
    <location>
        <begin position="751"/>
        <end position="790"/>
    </location>
</feature>
<feature type="region of interest" description="Disordered" evidence="4">
    <location>
        <begin position="1"/>
        <end position="53"/>
    </location>
</feature>
<feature type="region of interest" description="Disordered" evidence="4">
    <location>
        <begin position="530"/>
        <end position="550"/>
    </location>
</feature>
<feature type="region of interest" description="Disordered" evidence="4">
    <location>
        <begin position="598"/>
        <end position="623"/>
    </location>
</feature>
<feature type="coiled-coil region" evidence="2">
    <location>
        <begin position="423"/>
        <end position="588"/>
    </location>
</feature>
<feature type="short sequence motif" description="D-BOX" evidence="1">
    <location>
        <begin position="372"/>
        <end position="380"/>
    </location>
</feature>
<feature type="compositionally biased region" description="Low complexity" evidence="4">
    <location>
        <begin position="19"/>
        <end position="50"/>
    </location>
</feature>
<feature type="compositionally biased region" description="Polar residues" evidence="4">
    <location>
        <begin position="603"/>
        <end position="623"/>
    </location>
</feature>
<feature type="binding site" evidence="3">
    <location>
        <begin position="145"/>
        <end position="152"/>
    </location>
    <ligand>
        <name>ATP</name>
        <dbReference type="ChEBI" id="CHEBI:30616"/>
    </ligand>
</feature>
<dbReference type="EMBL" id="AB290929">
    <property type="protein sequence ID" value="BAF95586.1"/>
    <property type="molecule type" value="mRNA"/>
</dbReference>
<dbReference type="EMBL" id="AC020622">
    <property type="protein sequence ID" value="AAF76473.1"/>
    <property type="status" value="ALT_SEQ"/>
    <property type="molecule type" value="Genomic_DNA"/>
</dbReference>
<dbReference type="EMBL" id="CP002684">
    <property type="protein sequence ID" value="AEE27357.1"/>
    <property type="molecule type" value="Genomic_DNA"/>
</dbReference>
<dbReference type="EMBL" id="AK229671">
    <property type="protein sequence ID" value="BAF01514.1"/>
    <property type="molecule type" value="mRNA"/>
</dbReference>
<dbReference type="PIR" id="D86151">
    <property type="entry name" value="D86151"/>
</dbReference>
<dbReference type="RefSeq" id="NP_171697.3">
    <molecule id="Q9LPC6-1"/>
    <property type="nucleotide sequence ID" value="NM_100075.8"/>
</dbReference>
<dbReference type="SMR" id="Q9LPC6"/>
<dbReference type="FunCoup" id="Q9LPC6">
    <property type="interactions" value="248"/>
</dbReference>
<dbReference type="STRING" id="3702.Q9LPC6"/>
<dbReference type="iPTMnet" id="Q9LPC6"/>
<dbReference type="PaxDb" id="3702-AT1G01950.3"/>
<dbReference type="EnsemblPlants" id="AT1G01950.1">
    <molecule id="Q9LPC6-1"/>
    <property type="protein sequence ID" value="AT1G01950.1"/>
    <property type="gene ID" value="AT1G01950"/>
</dbReference>
<dbReference type="GeneID" id="839306"/>
<dbReference type="Gramene" id="AT1G01950.1">
    <molecule id="Q9LPC6-1"/>
    <property type="protein sequence ID" value="AT1G01950.1"/>
    <property type="gene ID" value="AT1G01950"/>
</dbReference>
<dbReference type="KEGG" id="ath:AT1G01950"/>
<dbReference type="Araport" id="AT1G01950"/>
<dbReference type="TAIR" id="AT1G01950">
    <property type="gene designation" value="ARK2"/>
</dbReference>
<dbReference type="eggNOG" id="KOG0240">
    <property type="taxonomic scope" value="Eukaryota"/>
</dbReference>
<dbReference type="InParanoid" id="Q9LPC6"/>
<dbReference type="PhylomeDB" id="Q9LPC6"/>
<dbReference type="PRO" id="PR:Q9LPC6"/>
<dbReference type="Proteomes" id="UP000006548">
    <property type="component" value="Chromosome 1"/>
</dbReference>
<dbReference type="ExpressionAtlas" id="Q9LPC6">
    <property type="expression patterns" value="baseline and differential"/>
</dbReference>
<dbReference type="GO" id="GO:0005737">
    <property type="term" value="C:cytoplasm"/>
    <property type="evidence" value="ECO:0007669"/>
    <property type="project" value="UniProtKB-KW"/>
</dbReference>
<dbReference type="GO" id="GO:0005874">
    <property type="term" value="C:microtubule"/>
    <property type="evidence" value="ECO:0007669"/>
    <property type="project" value="UniProtKB-KW"/>
</dbReference>
<dbReference type="GO" id="GO:0005524">
    <property type="term" value="F:ATP binding"/>
    <property type="evidence" value="ECO:0007669"/>
    <property type="project" value="UniProtKB-KW"/>
</dbReference>
<dbReference type="GO" id="GO:0008017">
    <property type="term" value="F:microtubule binding"/>
    <property type="evidence" value="ECO:0007669"/>
    <property type="project" value="InterPro"/>
</dbReference>
<dbReference type="GO" id="GO:0003777">
    <property type="term" value="F:microtubule motor activity"/>
    <property type="evidence" value="ECO:0007669"/>
    <property type="project" value="InterPro"/>
</dbReference>
<dbReference type="GO" id="GO:0007018">
    <property type="term" value="P:microtubule-based movement"/>
    <property type="evidence" value="ECO:0007669"/>
    <property type="project" value="InterPro"/>
</dbReference>
<dbReference type="CDD" id="cd00106">
    <property type="entry name" value="KISc"/>
    <property type="match status" value="1"/>
</dbReference>
<dbReference type="FunFam" id="1.25.10.10:FF:000639">
    <property type="entry name" value="Kinesin-like protein"/>
    <property type="match status" value="1"/>
</dbReference>
<dbReference type="FunFam" id="1.25.10.10:FF:000676">
    <property type="entry name" value="Kinesin-like protein"/>
    <property type="match status" value="1"/>
</dbReference>
<dbReference type="FunFam" id="3.40.850.10:FF:000036">
    <property type="entry name" value="Kinesin-like protein"/>
    <property type="match status" value="1"/>
</dbReference>
<dbReference type="Gene3D" id="3.40.850.10">
    <property type="entry name" value="Kinesin motor domain"/>
    <property type="match status" value="1"/>
</dbReference>
<dbReference type="Gene3D" id="1.25.10.10">
    <property type="entry name" value="Leucine-rich Repeat Variant"/>
    <property type="match status" value="1"/>
</dbReference>
<dbReference type="InterPro" id="IPR011989">
    <property type="entry name" value="ARM-like"/>
</dbReference>
<dbReference type="InterPro" id="IPR016024">
    <property type="entry name" value="ARM-type_fold"/>
</dbReference>
<dbReference type="InterPro" id="IPR000225">
    <property type="entry name" value="Armadillo"/>
</dbReference>
<dbReference type="InterPro" id="IPR047149">
    <property type="entry name" value="KIF11-like"/>
</dbReference>
<dbReference type="InterPro" id="IPR019821">
    <property type="entry name" value="Kinesin_motor_CS"/>
</dbReference>
<dbReference type="InterPro" id="IPR001752">
    <property type="entry name" value="Kinesin_motor_dom"/>
</dbReference>
<dbReference type="InterPro" id="IPR036961">
    <property type="entry name" value="Kinesin_motor_dom_sf"/>
</dbReference>
<dbReference type="InterPro" id="IPR027417">
    <property type="entry name" value="P-loop_NTPase"/>
</dbReference>
<dbReference type="PANTHER" id="PTHR47970:SF30">
    <property type="entry name" value="KINESIN-LIKE PROTEIN"/>
    <property type="match status" value="1"/>
</dbReference>
<dbReference type="PANTHER" id="PTHR47970">
    <property type="entry name" value="KINESIN-LIKE PROTEIN KIF11"/>
    <property type="match status" value="1"/>
</dbReference>
<dbReference type="Pfam" id="PF00514">
    <property type="entry name" value="Arm"/>
    <property type="match status" value="1"/>
</dbReference>
<dbReference type="Pfam" id="PF00225">
    <property type="entry name" value="Kinesin"/>
    <property type="match status" value="1"/>
</dbReference>
<dbReference type="PRINTS" id="PR00380">
    <property type="entry name" value="KINESINHEAVY"/>
</dbReference>
<dbReference type="SMART" id="SM00185">
    <property type="entry name" value="ARM"/>
    <property type="match status" value="4"/>
</dbReference>
<dbReference type="SMART" id="SM00129">
    <property type="entry name" value="KISc"/>
    <property type="match status" value="1"/>
</dbReference>
<dbReference type="SUPFAM" id="SSF48371">
    <property type="entry name" value="ARM repeat"/>
    <property type="match status" value="1"/>
</dbReference>
<dbReference type="SUPFAM" id="SSF52540">
    <property type="entry name" value="P-loop containing nucleoside triphosphate hydrolases"/>
    <property type="match status" value="1"/>
</dbReference>
<dbReference type="PROSITE" id="PS50176">
    <property type="entry name" value="ARM_REPEAT"/>
    <property type="match status" value="2"/>
</dbReference>
<dbReference type="PROSITE" id="PS00411">
    <property type="entry name" value="KINESIN_MOTOR_1"/>
    <property type="match status" value="1"/>
</dbReference>
<dbReference type="PROSITE" id="PS50067">
    <property type="entry name" value="KINESIN_MOTOR_2"/>
    <property type="match status" value="1"/>
</dbReference>
<proteinExistence type="evidence at protein level"/>
<protein>
    <recommendedName>
        <fullName evidence="9">Kinesin-like protein KIN-UB</fullName>
    </recommendedName>
    <alternativeName>
        <fullName evidence="8">AtKINUb</fullName>
    </alternativeName>
    <alternativeName>
        <fullName evidence="7">Protein ARMADILLO REPEAT KINESIN2</fullName>
    </alternativeName>
    <alternativeName>
        <fullName evidence="9">Protein ARMADILLO REPEAT-CONTAINING KINESIN 2</fullName>
    </alternativeName>
</protein>
<organism>
    <name type="scientific">Arabidopsis thaliana</name>
    <name type="common">Mouse-ear cress</name>
    <dbReference type="NCBI Taxonomy" id="3702"/>
    <lineage>
        <taxon>Eukaryota</taxon>
        <taxon>Viridiplantae</taxon>
        <taxon>Streptophyta</taxon>
        <taxon>Embryophyta</taxon>
        <taxon>Tracheophyta</taxon>
        <taxon>Spermatophyta</taxon>
        <taxon>Magnoliopsida</taxon>
        <taxon>eudicotyledons</taxon>
        <taxon>Gunneridae</taxon>
        <taxon>Pentapetalae</taxon>
        <taxon>rosids</taxon>
        <taxon>malvids</taxon>
        <taxon>Brassicales</taxon>
        <taxon>Brassicaceae</taxon>
        <taxon>Camelineae</taxon>
        <taxon>Arabidopsis</taxon>
    </lineage>
</organism>
<reference key="1">
    <citation type="journal article" date="2008" name="Plant J.">
        <title>Armadillo repeat-containing kinesins and a NIMA-related kinase are required for epidermal-cell morphogenesis in Arabidopsis.</title>
        <authorList>
            <person name="Sakai T."/>
            <person name="van der Honing H."/>
            <person name="Nishioka M."/>
            <person name="Uehara Y."/>
            <person name="Takahashi M."/>
            <person name="Fujisawa N."/>
            <person name="Saji K."/>
            <person name="Seki M."/>
            <person name="Shinozaki K."/>
            <person name="Jones M.A."/>
            <person name="Smirnoff N."/>
            <person name="Okada K."/>
            <person name="Wasteneys G.O."/>
        </authorList>
    </citation>
    <scope>NUCLEOTIDE SEQUENCE [MRNA]</scope>
    <scope>FUNCTION</scope>
    <scope>TISSUE SPECIFICITY</scope>
    <scope>INTERACTION WITH NEK5</scope>
    <source>
        <strain>cv. Landsberg erecta</strain>
    </source>
</reference>
<reference key="2">
    <citation type="journal article" date="2000" name="Nature">
        <title>Sequence and analysis of chromosome 1 of the plant Arabidopsis thaliana.</title>
        <authorList>
            <person name="Theologis A."/>
            <person name="Ecker J.R."/>
            <person name="Palm C.J."/>
            <person name="Federspiel N.A."/>
            <person name="Kaul S."/>
            <person name="White O."/>
            <person name="Alonso J."/>
            <person name="Altafi H."/>
            <person name="Araujo R."/>
            <person name="Bowman C.L."/>
            <person name="Brooks S.Y."/>
            <person name="Buehler E."/>
            <person name="Chan A."/>
            <person name="Chao Q."/>
            <person name="Chen H."/>
            <person name="Cheuk R.F."/>
            <person name="Chin C.W."/>
            <person name="Chung M.K."/>
            <person name="Conn L."/>
            <person name="Conway A.B."/>
            <person name="Conway A.R."/>
            <person name="Creasy T.H."/>
            <person name="Dewar K."/>
            <person name="Dunn P."/>
            <person name="Etgu P."/>
            <person name="Feldblyum T.V."/>
            <person name="Feng J.-D."/>
            <person name="Fong B."/>
            <person name="Fujii C.Y."/>
            <person name="Gill J.E."/>
            <person name="Goldsmith A.D."/>
            <person name="Haas B."/>
            <person name="Hansen N.F."/>
            <person name="Hughes B."/>
            <person name="Huizar L."/>
            <person name="Hunter J.L."/>
            <person name="Jenkins J."/>
            <person name="Johnson-Hopson C."/>
            <person name="Khan S."/>
            <person name="Khaykin E."/>
            <person name="Kim C.J."/>
            <person name="Koo H.L."/>
            <person name="Kremenetskaia I."/>
            <person name="Kurtz D.B."/>
            <person name="Kwan A."/>
            <person name="Lam B."/>
            <person name="Langin-Hooper S."/>
            <person name="Lee A."/>
            <person name="Lee J.M."/>
            <person name="Lenz C.A."/>
            <person name="Li J.H."/>
            <person name="Li Y.-P."/>
            <person name="Lin X."/>
            <person name="Liu S.X."/>
            <person name="Liu Z.A."/>
            <person name="Luros J.S."/>
            <person name="Maiti R."/>
            <person name="Marziali A."/>
            <person name="Militscher J."/>
            <person name="Miranda M."/>
            <person name="Nguyen M."/>
            <person name="Nierman W.C."/>
            <person name="Osborne B.I."/>
            <person name="Pai G."/>
            <person name="Peterson J."/>
            <person name="Pham P.K."/>
            <person name="Rizzo M."/>
            <person name="Rooney T."/>
            <person name="Rowley D."/>
            <person name="Sakano H."/>
            <person name="Salzberg S.L."/>
            <person name="Schwartz J.R."/>
            <person name="Shinn P."/>
            <person name="Southwick A.M."/>
            <person name="Sun H."/>
            <person name="Tallon L.J."/>
            <person name="Tambunga G."/>
            <person name="Toriumi M.J."/>
            <person name="Town C.D."/>
            <person name="Utterback T."/>
            <person name="Van Aken S."/>
            <person name="Vaysberg M."/>
            <person name="Vysotskaia V.S."/>
            <person name="Walker M."/>
            <person name="Wu D."/>
            <person name="Yu G."/>
            <person name="Fraser C.M."/>
            <person name="Venter J.C."/>
            <person name="Davis R.W."/>
        </authorList>
    </citation>
    <scope>NUCLEOTIDE SEQUENCE [LARGE SCALE GENOMIC DNA]</scope>
    <source>
        <strain>cv. Columbia</strain>
    </source>
</reference>
<reference key="3">
    <citation type="journal article" date="2017" name="Plant J.">
        <title>Araport11: a complete reannotation of the Arabidopsis thaliana reference genome.</title>
        <authorList>
            <person name="Cheng C.Y."/>
            <person name="Krishnakumar V."/>
            <person name="Chan A.P."/>
            <person name="Thibaud-Nissen F."/>
            <person name="Schobel S."/>
            <person name="Town C.D."/>
        </authorList>
    </citation>
    <scope>GENOME REANNOTATION</scope>
    <source>
        <strain>cv. Columbia</strain>
    </source>
</reference>
<reference key="4">
    <citation type="submission" date="2006-07" db="EMBL/GenBank/DDBJ databases">
        <title>Large-scale analysis of RIKEN Arabidopsis full-length (RAFL) cDNAs.</title>
        <authorList>
            <person name="Totoki Y."/>
            <person name="Seki M."/>
            <person name="Ishida J."/>
            <person name="Nakajima M."/>
            <person name="Enju A."/>
            <person name="Kamiya A."/>
            <person name="Narusaka M."/>
            <person name="Shin-i T."/>
            <person name="Nakagawa M."/>
            <person name="Sakamoto N."/>
            <person name="Oishi K."/>
            <person name="Kohara Y."/>
            <person name="Kobayashi M."/>
            <person name="Toyoda A."/>
            <person name="Sakaki Y."/>
            <person name="Sakurai T."/>
            <person name="Iida K."/>
            <person name="Akiyama K."/>
            <person name="Satou M."/>
            <person name="Toyoda T."/>
            <person name="Konagaya A."/>
            <person name="Carninci P."/>
            <person name="Kawai J."/>
            <person name="Hayashizaki Y."/>
            <person name="Shinozaki K."/>
        </authorList>
    </citation>
    <scope>NUCLEOTIDE SEQUENCE [LARGE SCALE MRNA] OF 684-894</scope>
    <source>
        <strain>cv. Columbia</strain>
    </source>
</reference>
<reference key="5">
    <citation type="journal article" date="2001" name="BMC Genomics">
        <title>Kinesins in the Arabidopsis genome: a comparative analysis among eukaryotes.</title>
        <authorList>
            <person name="Reddy A.S."/>
            <person name="Day I.S."/>
        </authorList>
    </citation>
    <scope>GENE FAMILY</scope>
</reference>
<reference key="6">
    <citation type="journal article" date="2006" name="BMC Genomics">
        <title>Comprehensive comparative analysis of kinesins in photosynthetic eukaryotes.</title>
        <authorList>
            <person name="Richardson D.N."/>
            <person name="Simmons M.P."/>
            <person name="Reddy A.S."/>
        </authorList>
    </citation>
    <scope>GENE FAMILY</scope>
    <scope>NOMENCLATURE</scope>
</reference>
<reference key="7">
    <citation type="journal article" date="2011" name="Cytoskeleton">
        <title>An ungrouped plant kinesin accumulates at the preprophase band in a cell cycle-dependent manner.</title>
        <authorList>
            <person name="Malcos J.L."/>
            <person name="Cyr R.J."/>
        </authorList>
    </citation>
    <scope>IDENTIFICATION</scope>
</reference>
<reference key="8">
    <citation type="journal article" date="2012" name="Protoplasma">
        <title>Functions of the Arabidopsis kinesin superfamily of microtubule-based motor proteins.</title>
        <authorList>
            <person name="Zhu C."/>
            <person name="Dixit R."/>
        </authorList>
    </citation>
    <scope>REVIEW</scope>
</reference>
<evidence type="ECO:0000250" key="1">
    <source>
        <dbReference type="UniProtKB" id="Q9FZ06"/>
    </source>
</evidence>
<evidence type="ECO:0000255" key="2"/>
<evidence type="ECO:0000255" key="3">
    <source>
        <dbReference type="PROSITE-ProRule" id="PRU00283"/>
    </source>
</evidence>
<evidence type="ECO:0000256" key="4">
    <source>
        <dbReference type="SAM" id="MobiDB-lite"/>
    </source>
</evidence>
<evidence type="ECO:0000269" key="5">
    <source>
    </source>
</evidence>
<evidence type="ECO:0000303" key="6">
    <source>
    </source>
</evidence>
<evidence type="ECO:0000303" key="7">
    <source>
    </source>
</evidence>
<evidence type="ECO:0000303" key="8">
    <source>
    </source>
</evidence>
<evidence type="ECO:0000305" key="9"/>
<evidence type="ECO:0000312" key="10">
    <source>
        <dbReference type="Araport" id="AT1G01950"/>
    </source>
</evidence>
<evidence type="ECO:0000312" key="11">
    <source>
        <dbReference type="EMBL" id="AAF76473.1"/>
    </source>
</evidence>
<evidence type="ECO:0000312" key="12">
    <source>
        <dbReference type="EMBL" id="BAF95586.1"/>
    </source>
</evidence>
<accession>Q9LPC6</accession>
<accession>A9CP40</accession>
<accession>Q0WMY6</accession>